<accession>A6ZZ19</accession>
<gene>
    <name type="primary">SIP1</name>
    <name type="ORF">SCY_1307</name>
</gene>
<comment type="function">
    <text evidence="1">Beta subunit of the SNF1 kinase complex, which is required for transcriptional, metabolic, and developmental adaptations in response to glucose limitation. Has a structural role, mediating heterotrimer formation, and a regulatory role, defining carbon source-regulated subcellular location and substrate specificity of the SNF1 kinase complex. Promotes the PKA-regulated relocalization of the SNF1 kinase complex to the vacuolar membrane in response to various types of carbon stress (By similarity).</text>
</comment>
<comment type="subunit">
    <text evidence="1">Component of the SNF1 kinase complex, a heterotrimeric complex composed of the catalytic alpha subunit SNF1, one of the three related beta subunits SIP1, SIP2 or GAL83, and the regulatory gamma subunit SNF4. The beta subunit serves as a bridge between the catalytic and the regulatory subunit. Interacts (via KIS domain) with SNF1. Interacts (via ASC domain) with SNF4 (By similarity).</text>
</comment>
<comment type="subcellular location">
    <subcellularLocation>
        <location evidence="1">Cytoplasm</location>
    </subcellularLocation>
    <subcellularLocation>
        <location evidence="1">Vacuole membrane</location>
        <topology evidence="1">Peripheral membrane protein</topology>
        <orientation evidence="1">Cytoplasmic side</orientation>
    </subcellularLocation>
    <text evidence="1">Resides in the cytosol during growth in glucose and relocalizes to the vacuolar membrane in response to carbon stress.</text>
</comment>
<comment type="PTM">
    <text evidence="1">Phosphorylated by SNF1 in vitro.</text>
</comment>
<comment type="similarity">
    <text evidence="5">Belongs to the 5'-AMP-activated protein kinase beta subunit family.</text>
</comment>
<comment type="sequence caution" evidence="5">
    <conflict type="erroneous initiation">
        <sequence resource="EMBL-CDS" id="EDN60749"/>
    </conflict>
</comment>
<protein>
    <recommendedName>
        <fullName>SNF1 protein kinase subunit beta-1</fullName>
    </recommendedName>
    <alternativeName>
        <fullName>SNF1-interacting protein 1</fullName>
    </alternativeName>
</protein>
<organism>
    <name type="scientific">Saccharomyces cerevisiae (strain YJM789)</name>
    <name type="common">Baker's yeast</name>
    <dbReference type="NCBI Taxonomy" id="307796"/>
    <lineage>
        <taxon>Eukaryota</taxon>
        <taxon>Fungi</taxon>
        <taxon>Dikarya</taxon>
        <taxon>Ascomycota</taxon>
        <taxon>Saccharomycotina</taxon>
        <taxon>Saccharomycetes</taxon>
        <taxon>Saccharomycetales</taxon>
        <taxon>Saccharomycetaceae</taxon>
        <taxon>Saccharomyces</taxon>
    </lineage>
</organism>
<keyword id="KW-0963">Cytoplasm</keyword>
<keyword id="KW-0449">Lipoprotein</keyword>
<keyword id="KW-0472">Membrane</keyword>
<keyword id="KW-0519">Myristate</keyword>
<keyword id="KW-0597">Phosphoprotein</keyword>
<keyword id="KW-0926">Vacuole</keyword>
<proteinExistence type="inferred from homology"/>
<evidence type="ECO:0000250" key="1"/>
<evidence type="ECO:0000250" key="2">
    <source>
        <dbReference type="UniProtKB" id="P32578"/>
    </source>
</evidence>
<evidence type="ECO:0000255" key="3"/>
<evidence type="ECO:0000256" key="4">
    <source>
        <dbReference type="SAM" id="MobiDB-lite"/>
    </source>
</evidence>
<evidence type="ECO:0000305" key="5"/>
<reference key="1">
    <citation type="journal article" date="2007" name="Proc. Natl. Acad. Sci. U.S.A.">
        <title>Genome sequencing and comparative analysis of Saccharomyces cerevisiae strain YJM789.</title>
        <authorList>
            <person name="Wei W."/>
            <person name="McCusker J.H."/>
            <person name="Hyman R.W."/>
            <person name="Jones T."/>
            <person name="Ning Y."/>
            <person name="Cao Z."/>
            <person name="Gu Z."/>
            <person name="Bruno D."/>
            <person name="Miranda M."/>
            <person name="Nguyen M."/>
            <person name="Wilhelmy J."/>
            <person name="Komp C."/>
            <person name="Tamse R."/>
            <person name="Wang X."/>
            <person name="Jia P."/>
            <person name="Luedi P."/>
            <person name="Oefner P.J."/>
            <person name="David L."/>
            <person name="Dietrich F.S."/>
            <person name="Li Y."/>
            <person name="Davis R.W."/>
            <person name="Steinmetz L.M."/>
        </authorList>
    </citation>
    <scope>NUCLEOTIDE SEQUENCE [LARGE SCALE GENOMIC DNA]</scope>
    <source>
        <strain>YJM789</strain>
    </source>
</reference>
<dbReference type="EMBL" id="AAFW02000145">
    <property type="protein sequence ID" value="EDN60749.1"/>
    <property type="status" value="ALT_INIT"/>
    <property type="molecule type" value="Genomic_DNA"/>
</dbReference>
<dbReference type="HOGENOM" id="CLU_011585_0_0_1"/>
<dbReference type="OrthoDB" id="42001at4893"/>
<dbReference type="Proteomes" id="UP000007060">
    <property type="component" value="Unassembled WGS sequence"/>
</dbReference>
<dbReference type="GO" id="GO:0031588">
    <property type="term" value="C:nucleotide-activated protein kinase complex"/>
    <property type="evidence" value="ECO:0007669"/>
    <property type="project" value="TreeGrafter"/>
</dbReference>
<dbReference type="GO" id="GO:0005634">
    <property type="term" value="C:nucleus"/>
    <property type="evidence" value="ECO:0007669"/>
    <property type="project" value="TreeGrafter"/>
</dbReference>
<dbReference type="GO" id="GO:0005774">
    <property type="term" value="C:vacuolar membrane"/>
    <property type="evidence" value="ECO:0007669"/>
    <property type="project" value="UniProtKB-SubCell"/>
</dbReference>
<dbReference type="GO" id="GO:0019901">
    <property type="term" value="F:protein kinase binding"/>
    <property type="evidence" value="ECO:0007669"/>
    <property type="project" value="TreeGrafter"/>
</dbReference>
<dbReference type="GO" id="GO:0007165">
    <property type="term" value="P:signal transduction"/>
    <property type="evidence" value="ECO:0007669"/>
    <property type="project" value="TreeGrafter"/>
</dbReference>
<dbReference type="CDD" id="cd02859">
    <property type="entry name" value="E_set_AMPKbeta_like_N"/>
    <property type="match status" value="1"/>
</dbReference>
<dbReference type="Gene3D" id="6.20.250.60">
    <property type="match status" value="1"/>
</dbReference>
<dbReference type="Gene3D" id="2.60.40.10">
    <property type="entry name" value="Immunoglobulins"/>
    <property type="match status" value="1"/>
</dbReference>
<dbReference type="InterPro" id="IPR032640">
    <property type="entry name" value="AMPK1_CBM"/>
</dbReference>
<dbReference type="InterPro" id="IPR006828">
    <property type="entry name" value="ASC_dom"/>
</dbReference>
<dbReference type="InterPro" id="IPR037256">
    <property type="entry name" value="ASC_dom_sf"/>
</dbReference>
<dbReference type="InterPro" id="IPR050827">
    <property type="entry name" value="CRP1_MDG1_kinase"/>
</dbReference>
<dbReference type="InterPro" id="IPR013783">
    <property type="entry name" value="Ig-like_fold"/>
</dbReference>
<dbReference type="InterPro" id="IPR014756">
    <property type="entry name" value="Ig_E-set"/>
</dbReference>
<dbReference type="PANTHER" id="PTHR10343">
    <property type="entry name" value="5'-AMP-ACTIVATED PROTEIN KINASE , BETA SUBUNIT"/>
    <property type="match status" value="1"/>
</dbReference>
<dbReference type="PANTHER" id="PTHR10343:SF87">
    <property type="entry name" value="SNF1 PROTEIN KINASE SUBUNIT BETA-1"/>
    <property type="match status" value="1"/>
</dbReference>
<dbReference type="Pfam" id="PF16561">
    <property type="entry name" value="AMPK1_CBM"/>
    <property type="match status" value="1"/>
</dbReference>
<dbReference type="Pfam" id="PF04739">
    <property type="entry name" value="AMPKBI"/>
    <property type="match status" value="1"/>
</dbReference>
<dbReference type="SMART" id="SM01010">
    <property type="entry name" value="AMPKBI"/>
    <property type="match status" value="1"/>
</dbReference>
<dbReference type="SUPFAM" id="SSF160219">
    <property type="entry name" value="AMPKBI-like"/>
    <property type="match status" value="1"/>
</dbReference>
<dbReference type="SUPFAM" id="SSF81296">
    <property type="entry name" value="E set domains"/>
    <property type="match status" value="1"/>
</dbReference>
<name>SIP1_YEAS7</name>
<feature type="initiator methionine" description="Removed" evidence="3">
    <location>
        <position position="1"/>
    </location>
</feature>
<feature type="chain" id="PRO_0000377633" description="SNF1 protein kinase subunit beta-1">
    <location>
        <begin position="2"/>
        <end position="815"/>
    </location>
</feature>
<feature type="region of interest" description="Disordered" evidence="4">
    <location>
        <begin position="1"/>
        <end position="88"/>
    </location>
</feature>
<feature type="region of interest" description="Disordered" evidence="4">
    <location>
        <begin position="117"/>
        <end position="148"/>
    </location>
</feature>
<feature type="region of interest" description="Disordered" evidence="4">
    <location>
        <begin position="310"/>
        <end position="335"/>
    </location>
</feature>
<feature type="region of interest" description="Disordered" evidence="4">
    <location>
        <begin position="363"/>
        <end position="389"/>
    </location>
</feature>
<feature type="region of interest" description="Disordered" evidence="4">
    <location>
        <begin position="410"/>
        <end position="444"/>
    </location>
</feature>
<feature type="region of interest" description="Kinase-interacting sequence (KIS); required for interaction with SNF1" evidence="1">
    <location>
        <begin position="473"/>
        <end position="716"/>
    </location>
</feature>
<feature type="region of interest" description="Disordered" evidence="4">
    <location>
        <begin position="583"/>
        <end position="616"/>
    </location>
</feature>
<feature type="region of interest" description="Association with SNF1 kinase complex (ASC) domain; required for interaction with SNF4" evidence="1">
    <location>
        <begin position="724"/>
        <end position="804"/>
    </location>
</feature>
<feature type="compositionally biased region" description="Polar residues" evidence="4">
    <location>
        <begin position="1"/>
        <end position="11"/>
    </location>
</feature>
<feature type="compositionally biased region" description="Basic and acidic residues" evidence="4">
    <location>
        <begin position="12"/>
        <end position="31"/>
    </location>
</feature>
<feature type="compositionally biased region" description="Polar residues" evidence="4">
    <location>
        <begin position="32"/>
        <end position="42"/>
    </location>
</feature>
<feature type="compositionally biased region" description="Basic and acidic residues" evidence="4">
    <location>
        <begin position="72"/>
        <end position="88"/>
    </location>
</feature>
<feature type="compositionally biased region" description="Basic and acidic residues" evidence="4">
    <location>
        <begin position="117"/>
        <end position="129"/>
    </location>
</feature>
<feature type="compositionally biased region" description="Low complexity" evidence="4">
    <location>
        <begin position="313"/>
        <end position="326"/>
    </location>
</feature>
<feature type="compositionally biased region" description="Basic residues" evidence="4">
    <location>
        <begin position="363"/>
        <end position="376"/>
    </location>
</feature>
<feature type="compositionally biased region" description="Low complexity" evidence="4">
    <location>
        <begin position="377"/>
        <end position="389"/>
    </location>
</feature>
<feature type="compositionally biased region" description="Low complexity" evidence="4">
    <location>
        <begin position="433"/>
        <end position="444"/>
    </location>
</feature>
<feature type="compositionally biased region" description="Basic and acidic residues" evidence="4">
    <location>
        <begin position="587"/>
        <end position="596"/>
    </location>
</feature>
<feature type="compositionally biased region" description="Low complexity" evidence="4">
    <location>
        <begin position="599"/>
        <end position="608"/>
    </location>
</feature>
<feature type="modified residue" description="Phosphoserine" evidence="2">
    <location>
        <position position="33"/>
    </location>
</feature>
<feature type="modified residue" description="Phosphoserine" evidence="2">
    <location>
        <position position="181"/>
    </location>
</feature>
<feature type="modified residue" description="Phosphoserine" evidence="2">
    <location>
        <position position="198"/>
    </location>
</feature>
<feature type="modified residue" description="Phosphoserine" evidence="2">
    <location>
        <position position="200"/>
    </location>
</feature>
<feature type="modified residue" description="Phosphoserine" evidence="2">
    <location>
        <position position="206"/>
    </location>
</feature>
<feature type="modified residue" description="Phosphoserine" evidence="2">
    <location>
        <position position="209"/>
    </location>
</feature>
<feature type="modified residue" description="Phosphoserine" evidence="2">
    <location>
        <position position="220"/>
    </location>
</feature>
<feature type="modified residue" description="Phosphoserine" evidence="2">
    <location>
        <position position="331"/>
    </location>
</feature>
<feature type="modified residue" description="Phosphoserine" evidence="2">
    <location>
        <position position="494"/>
    </location>
</feature>
<feature type="modified residue" description="Phosphoserine" evidence="2">
    <location>
        <position position="497"/>
    </location>
</feature>
<feature type="modified residue" description="Phosphoserine" evidence="2">
    <location>
        <position position="643"/>
    </location>
</feature>
<feature type="lipid moiety-binding region" description="N-myristoyl glycine" evidence="1">
    <location>
        <position position="2"/>
    </location>
</feature>
<sequence>MGNSPSTQDPSHSTKKEHGHHFHDAFNKDRQGSITSQLFNNRKSTHKRRASHTSEHNGAIPPRMQLLASHDPSTDCDGRMSSDTTIDKGPSHLFKKDYSLSSAADVNDTTLANLTLSDDHDVGAPEEQVKSPSFLSPGPSMATVKQTKSDLDDLSTLNYTMVDETTENERNDKPHHERHRSSIIALKKNLLESSATASPSPTRSSSVHSASLPALTKTDSIDIPVRQPYSKKPSIHAYQYQYLNNDETFSENSQMDKEGNSDSVDAEAGVLQSEDMVLNQSLLQNALKKDMQRLSRVNSSNSMYTTERISHANNNGNIENNTRNKGNAGGSNDDFTAPISATAKMMMKLYGDKTLMERDLNKHQNKTKKAQNKKIRSASNSRRSSFASLHSLQSRKSILTNGLNLQPLHPLHPIINDNESQYSAPQHREISHHSNSMSSMSSISSTNSTENTLVVLKWKDDGTVAATTEVFIVSTDIASALKEQRELTLDENASLDSEKQLNPRIRMVYDDVHKEWFVPDLFLPAGIYRLQFSINGILTHSNFLPTATDSEGNFVNWFEVLPGYHTIEPFRNEADMDSQVEPTLDEELPKRPELKRFPSSSRKSSYYSAKGVERPSTPFSDYRGLSRSSSINMRDSFVRLKASSLDLMAEVKPERLVYSNEIPNLFNIGDGSTISVKGDSDDVHPQEPPSFTHRVVDCNQDDLFATLQQGGNIDAETAEAVFLSRYPVPDLPIYLNSSYLNRILNQSNQNSESHERDEGAINHIIPHVNLNHLLTSSIRDEIISVACTTRYEGKFITQVVYAPCYYKTQKSQISN</sequence>